<evidence type="ECO:0000250" key="1"/>
<evidence type="ECO:0000305" key="2"/>
<geneLocation type="chloroplast"/>
<dbReference type="EMBL" id="AP007232">
    <property type="protein sequence ID" value="BAE47631.1"/>
    <property type="molecule type" value="Genomic_DNA"/>
</dbReference>
<dbReference type="EMBL" id="DQ383816">
    <property type="protein sequence ID" value="ABD47268.1"/>
    <property type="molecule type" value="Genomic_DNA"/>
</dbReference>
<dbReference type="RefSeq" id="YP_398364.1">
    <property type="nucleotide sequence ID" value="NC_007578.1"/>
</dbReference>
<dbReference type="SMR" id="Q332U1"/>
<dbReference type="GeneID" id="3772799"/>
<dbReference type="KEGG" id="lsv:3772799"/>
<dbReference type="OrthoDB" id="409928at2759"/>
<dbReference type="GO" id="GO:0009507">
    <property type="term" value="C:chloroplast"/>
    <property type="evidence" value="ECO:0007669"/>
    <property type="project" value="UniProtKB-SubCell"/>
</dbReference>
<dbReference type="GO" id="GO:1990904">
    <property type="term" value="C:ribonucleoprotein complex"/>
    <property type="evidence" value="ECO:0007669"/>
    <property type="project" value="UniProtKB-KW"/>
</dbReference>
<dbReference type="GO" id="GO:0005840">
    <property type="term" value="C:ribosome"/>
    <property type="evidence" value="ECO:0007669"/>
    <property type="project" value="UniProtKB-KW"/>
</dbReference>
<dbReference type="GO" id="GO:0019843">
    <property type="term" value="F:rRNA binding"/>
    <property type="evidence" value="ECO:0007669"/>
    <property type="project" value="UniProtKB-UniRule"/>
</dbReference>
<dbReference type="GO" id="GO:0003735">
    <property type="term" value="F:structural constituent of ribosome"/>
    <property type="evidence" value="ECO:0007669"/>
    <property type="project" value="InterPro"/>
</dbReference>
<dbReference type="GO" id="GO:0006412">
    <property type="term" value="P:translation"/>
    <property type="evidence" value="ECO:0007669"/>
    <property type="project" value="UniProtKB-UniRule"/>
</dbReference>
<dbReference type="FunFam" id="3.30.1490.10:FF:000001">
    <property type="entry name" value="30S ribosomal protein S8"/>
    <property type="match status" value="1"/>
</dbReference>
<dbReference type="Gene3D" id="3.30.1370.30">
    <property type="match status" value="1"/>
</dbReference>
<dbReference type="Gene3D" id="3.30.1490.10">
    <property type="match status" value="1"/>
</dbReference>
<dbReference type="HAMAP" id="MF_01302_B">
    <property type="entry name" value="Ribosomal_uS8_B"/>
    <property type="match status" value="1"/>
</dbReference>
<dbReference type="InterPro" id="IPR000630">
    <property type="entry name" value="Ribosomal_uS8"/>
</dbReference>
<dbReference type="InterPro" id="IPR047863">
    <property type="entry name" value="Ribosomal_uS8_CS"/>
</dbReference>
<dbReference type="InterPro" id="IPR035987">
    <property type="entry name" value="Ribosomal_uS8_sf"/>
</dbReference>
<dbReference type="NCBIfam" id="NF001109">
    <property type="entry name" value="PRK00136.1"/>
    <property type="match status" value="1"/>
</dbReference>
<dbReference type="PANTHER" id="PTHR11758">
    <property type="entry name" value="40S RIBOSOMAL PROTEIN S15A"/>
    <property type="match status" value="1"/>
</dbReference>
<dbReference type="Pfam" id="PF00410">
    <property type="entry name" value="Ribosomal_S8"/>
    <property type="match status" value="1"/>
</dbReference>
<dbReference type="SUPFAM" id="SSF56047">
    <property type="entry name" value="Ribosomal protein S8"/>
    <property type="match status" value="1"/>
</dbReference>
<dbReference type="PROSITE" id="PS00053">
    <property type="entry name" value="RIBOSOMAL_S8"/>
    <property type="match status" value="1"/>
</dbReference>
<accession>Q332U1</accession>
<accession>Q1KXI6</accession>
<keyword id="KW-0150">Chloroplast</keyword>
<keyword id="KW-0934">Plastid</keyword>
<keyword id="KW-0687">Ribonucleoprotein</keyword>
<keyword id="KW-0689">Ribosomal protein</keyword>
<keyword id="KW-0694">RNA-binding</keyword>
<keyword id="KW-0699">rRNA-binding</keyword>
<organism>
    <name type="scientific">Lactuca sativa</name>
    <name type="common">Garden lettuce</name>
    <dbReference type="NCBI Taxonomy" id="4236"/>
    <lineage>
        <taxon>Eukaryota</taxon>
        <taxon>Viridiplantae</taxon>
        <taxon>Streptophyta</taxon>
        <taxon>Embryophyta</taxon>
        <taxon>Tracheophyta</taxon>
        <taxon>Spermatophyta</taxon>
        <taxon>Magnoliopsida</taxon>
        <taxon>eudicotyledons</taxon>
        <taxon>Gunneridae</taxon>
        <taxon>Pentapetalae</taxon>
        <taxon>asterids</taxon>
        <taxon>campanulids</taxon>
        <taxon>Asterales</taxon>
        <taxon>Asteraceae</taxon>
        <taxon>Cichorioideae</taxon>
        <taxon>Cichorieae</taxon>
        <taxon>Lactucinae</taxon>
        <taxon>Lactuca</taxon>
    </lineage>
</organism>
<gene>
    <name type="primary">rps8</name>
</gene>
<proteinExistence type="inferred from homology"/>
<comment type="function">
    <text evidence="1">One of the primary rRNA binding proteins, it binds directly to 16S rRNA central domain where it helps coordinate assembly of the platform of the 30S subunit.</text>
</comment>
<comment type="subunit">
    <text evidence="1">Part of the 30S ribosomal subunit.</text>
</comment>
<comment type="subcellular location">
    <subcellularLocation>
        <location>Plastid</location>
        <location>Chloroplast</location>
    </subcellularLocation>
</comment>
<comment type="similarity">
    <text evidence="2">Belongs to the universal ribosomal protein uS8 family.</text>
</comment>
<name>RR8_LACSA</name>
<sequence>MGSDTIADIITSIRNADMYRKSVVRVASTNISQSIVKILLREGFIENVRKHRENNKSFLVLTLRHRRNRKRTYRNLLNLKRISRPGLRIYSNYQRIPRILGGMGIVILSTSQGIMTDREARLERIGGEILCYIW</sequence>
<protein>
    <recommendedName>
        <fullName evidence="2">Small ribosomal subunit protein uS8c</fullName>
    </recommendedName>
    <alternativeName>
        <fullName>30S ribosomal protein S8, chloroplastic</fullName>
    </alternativeName>
</protein>
<reference key="1">
    <citation type="journal article" date="2006" name="Transgenic Res.">
        <title>Efficient and stable transformation of Lactuca sativa L. cv. Cisco (lettuce) plastids.</title>
        <authorList>
            <person name="Kanamoto H."/>
            <person name="Yamashita A."/>
            <person name="Asao H."/>
            <person name="Okumura S."/>
            <person name="Takase H."/>
            <person name="Hattori M."/>
            <person name="Yokota A."/>
            <person name="Tomizawa K."/>
        </authorList>
    </citation>
    <scope>NUCLEOTIDE SEQUENCE [LARGE SCALE GENOMIC DNA]</scope>
    <source>
        <strain>cv. Cisco</strain>
    </source>
</reference>
<reference key="2">
    <citation type="submission" date="2006-01" db="EMBL/GenBank/DDBJ databases">
        <title>A comparison of the first two published chloroplast genomes in Asteraceae: Lactuca and Helianthus.</title>
        <authorList>
            <person name="Timme R.E."/>
            <person name="Kuehl J.V."/>
            <person name="Boore J.L."/>
            <person name="Jansen R.K."/>
        </authorList>
    </citation>
    <scope>NUCLEOTIDE SEQUENCE [LARGE SCALE GENOMIC DNA]</scope>
    <source>
        <strain>cv. Salinas</strain>
    </source>
</reference>
<feature type="chain" id="PRO_0000225908" description="Small ribosomal subunit protein uS8c">
    <location>
        <begin position="1"/>
        <end position="134"/>
    </location>
</feature>